<evidence type="ECO:0000250" key="1">
    <source>
        <dbReference type="UniProtKB" id="Q969S6"/>
    </source>
</evidence>
<evidence type="ECO:0000255" key="2"/>
<evidence type="ECO:0000269" key="3">
    <source>
    </source>
</evidence>
<evidence type="ECO:0000269" key="4">
    <source>
    </source>
</evidence>
<evidence type="ECO:0000305" key="5"/>
<keyword id="KW-0256">Endoplasmic reticulum</keyword>
<keyword id="KW-0458">Lysosome</keyword>
<keyword id="KW-0472">Membrane</keyword>
<keyword id="KW-1185">Reference proteome</keyword>
<keyword id="KW-0812">Transmembrane</keyword>
<keyword id="KW-1133">Transmembrane helix</keyword>
<name>TM203_MOUSE</name>
<organism>
    <name type="scientific">Mus musculus</name>
    <name type="common">Mouse</name>
    <dbReference type="NCBI Taxonomy" id="10090"/>
    <lineage>
        <taxon>Eukaryota</taxon>
        <taxon>Metazoa</taxon>
        <taxon>Chordata</taxon>
        <taxon>Craniata</taxon>
        <taxon>Vertebrata</taxon>
        <taxon>Euteleostomi</taxon>
        <taxon>Mammalia</taxon>
        <taxon>Eutheria</taxon>
        <taxon>Euarchontoglires</taxon>
        <taxon>Glires</taxon>
        <taxon>Rodentia</taxon>
        <taxon>Myomorpha</taxon>
        <taxon>Muroidea</taxon>
        <taxon>Muridae</taxon>
        <taxon>Murinae</taxon>
        <taxon>Mus</taxon>
        <taxon>Mus</taxon>
    </lineage>
</organism>
<feature type="chain" id="PRO_0000317204" description="Transmembrane protein 203">
    <location>
        <begin position="1"/>
        <end position="136"/>
    </location>
</feature>
<feature type="transmembrane region" description="Helical" evidence="2">
    <location>
        <begin position="14"/>
        <end position="34"/>
    </location>
</feature>
<feature type="transmembrane region" description="Helical" evidence="2">
    <location>
        <begin position="50"/>
        <end position="72"/>
    </location>
</feature>
<feature type="transmembrane region" description="Helical" evidence="2">
    <location>
        <begin position="81"/>
        <end position="101"/>
    </location>
</feature>
<feature type="transmembrane region" description="Helical" evidence="2">
    <location>
        <begin position="112"/>
        <end position="132"/>
    </location>
</feature>
<feature type="region of interest" description="Interaction with STING1" evidence="4">
    <location>
        <begin position="1"/>
        <end position="51"/>
    </location>
</feature>
<feature type="region of interest" description="Required for lysosomal localization of the STING-TMEM203 complex" evidence="4">
    <location>
        <begin position="52"/>
        <end position="136"/>
    </location>
</feature>
<feature type="sequence conflict" description="In Ref. 1; BAC34652." evidence="5" ref="1">
    <original>T</original>
    <variation>K</variation>
    <location>
        <position position="118"/>
    </location>
</feature>
<sequence length="136" mass="15776">MLFSLRELVQWLGFATFEIFVHLLALLVFSVLLALRVDGLTPGLSWWNVFVPFFAADGLSTYFTTIVSVRLFQDGEKRLAVLRLFWVLTVLSLKFVFEMLLCQKLVEQTRELWFGLITSPVFILLQLLMIRACRVN</sequence>
<accession>Q8R235</accession>
<accession>Q8BQ59</accession>
<comment type="function">
    <text evidence="3 4">Involved in the regulation of cellular calcium homeotasis (PubMed:25996873). Required for spermatogenesis (PubMed:25996873). Acts as a regulator of STING-mediated inflammatory signaling in macrophages (PubMed:31346090). Forms a complex with STING, promoting the activity of TBK1 kinase and the transcription factor IRF3, leading to activation of type I interferon expression (PubMed:31346090).</text>
</comment>
<comment type="subunit">
    <text evidence="1 4">Homodimer (PubMed:31346090). Interacts with ATP2A2 and ITPR3 (By similarity). Interacts with STIM1 and STING1 (via transmembrane domain) (PubMed:31346090).</text>
</comment>
<comment type="subcellular location">
    <subcellularLocation>
        <location evidence="4">Endoplasmic reticulum membrane</location>
        <topology evidence="2">Multi-pass membrane protein</topology>
    </subcellularLocation>
    <subcellularLocation>
        <location evidence="4">Endoplasmic reticulum-Golgi intermediate compartment</location>
    </subcellularLocation>
    <subcellularLocation>
        <location evidence="4">Lysosome membrane</location>
        <topology evidence="2">Multi-pass membrane protein</topology>
    </subcellularLocation>
    <text evidence="4">Co-localizes with STING1 in the lysosome membrane, mediates lysosomal localization of STING1.</text>
</comment>
<comment type="disruption phenotype">
    <text evidence="3">Male mutants are sterile and exhibit a profound defect in spermatogenesis and spermagiogenesis.</text>
</comment>
<reference key="1">
    <citation type="journal article" date="2005" name="Science">
        <title>The transcriptional landscape of the mammalian genome.</title>
        <authorList>
            <person name="Carninci P."/>
            <person name="Kasukawa T."/>
            <person name="Katayama S."/>
            <person name="Gough J."/>
            <person name="Frith M.C."/>
            <person name="Maeda N."/>
            <person name="Oyama R."/>
            <person name="Ravasi T."/>
            <person name="Lenhard B."/>
            <person name="Wells C."/>
            <person name="Kodzius R."/>
            <person name="Shimokawa K."/>
            <person name="Bajic V.B."/>
            <person name="Brenner S.E."/>
            <person name="Batalov S."/>
            <person name="Forrest A.R."/>
            <person name="Zavolan M."/>
            <person name="Davis M.J."/>
            <person name="Wilming L.G."/>
            <person name="Aidinis V."/>
            <person name="Allen J.E."/>
            <person name="Ambesi-Impiombato A."/>
            <person name="Apweiler R."/>
            <person name="Aturaliya R.N."/>
            <person name="Bailey T.L."/>
            <person name="Bansal M."/>
            <person name="Baxter L."/>
            <person name="Beisel K.W."/>
            <person name="Bersano T."/>
            <person name="Bono H."/>
            <person name="Chalk A.M."/>
            <person name="Chiu K.P."/>
            <person name="Choudhary V."/>
            <person name="Christoffels A."/>
            <person name="Clutterbuck D.R."/>
            <person name="Crowe M.L."/>
            <person name="Dalla E."/>
            <person name="Dalrymple B.P."/>
            <person name="de Bono B."/>
            <person name="Della Gatta G."/>
            <person name="di Bernardo D."/>
            <person name="Down T."/>
            <person name="Engstrom P."/>
            <person name="Fagiolini M."/>
            <person name="Faulkner G."/>
            <person name="Fletcher C.F."/>
            <person name="Fukushima T."/>
            <person name="Furuno M."/>
            <person name="Futaki S."/>
            <person name="Gariboldi M."/>
            <person name="Georgii-Hemming P."/>
            <person name="Gingeras T.R."/>
            <person name="Gojobori T."/>
            <person name="Green R.E."/>
            <person name="Gustincich S."/>
            <person name="Harbers M."/>
            <person name="Hayashi Y."/>
            <person name="Hensch T.K."/>
            <person name="Hirokawa N."/>
            <person name="Hill D."/>
            <person name="Huminiecki L."/>
            <person name="Iacono M."/>
            <person name="Ikeo K."/>
            <person name="Iwama A."/>
            <person name="Ishikawa T."/>
            <person name="Jakt M."/>
            <person name="Kanapin A."/>
            <person name="Katoh M."/>
            <person name="Kawasawa Y."/>
            <person name="Kelso J."/>
            <person name="Kitamura H."/>
            <person name="Kitano H."/>
            <person name="Kollias G."/>
            <person name="Krishnan S.P."/>
            <person name="Kruger A."/>
            <person name="Kummerfeld S.K."/>
            <person name="Kurochkin I.V."/>
            <person name="Lareau L.F."/>
            <person name="Lazarevic D."/>
            <person name="Lipovich L."/>
            <person name="Liu J."/>
            <person name="Liuni S."/>
            <person name="McWilliam S."/>
            <person name="Madan Babu M."/>
            <person name="Madera M."/>
            <person name="Marchionni L."/>
            <person name="Matsuda H."/>
            <person name="Matsuzawa S."/>
            <person name="Miki H."/>
            <person name="Mignone F."/>
            <person name="Miyake S."/>
            <person name="Morris K."/>
            <person name="Mottagui-Tabar S."/>
            <person name="Mulder N."/>
            <person name="Nakano N."/>
            <person name="Nakauchi H."/>
            <person name="Ng P."/>
            <person name="Nilsson R."/>
            <person name="Nishiguchi S."/>
            <person name="Nishikawa S."/>
            <person name="Nori F."/>
            <person name="Ohara O."/>
            <person name="Okazaki Y."/>
            <person name="Orlando V."/>
            <person name="Pang K.C."/>
            <person name="Pavan W.J."/>
            <person name="Pavesi G."/>
            <person name="Pesole G."/>
            <person name="Petrovsky N."/>
            <person name="Piazza S."/>
            <person name="Reed J."/>
            <person name="Reid J.F."/>
            <person name="Ring B.Z."/>
            <person name="Ringwald M."/>
            <person name="Rost B."/>
            <person name="Ruan Y."/>
            <person name="Salzberg S.L."/>
            <person name="Sandelin A."/>
            <person name="Schneider C."/>
            <person name="Schoenbach C."/>
            <person name="Sekiguchi K."/>
            <person name="Semple C.A."/>
            <person name="Seno S."/>
            <person name="Sessa L."/>
            <person name="Sheng Y."/>
            <person name="Shibata Y."/>
            <person name="Shimada H."/>
            <person name="Shimada K."/>
            <person name="Silva D."/>
            <person name="Sinclair B."/>
            <person name="Sperling S."/>
            <person name="Stupka E."/>
            <person name="Sugiura K."/>
            <person name="Sultana R."/>
            <person name="Takenaka Y."/>
            <person name="Taki K."/>
            <person name="Tammoja K."/>
            <person name="Tan S.L."/>
            <person name="Tang S."/>
            <person name="Taylor M.S."/>
            <person name="Tegner J."/>
            <person name="Teichmann S.A."/>
            <person name="Ueda H.R."/>
            <person name="van Nimwegen E."/>
            <person name="Verardo R."/>
            <person name="Wei C.L."/>
            <person name="Yagi K."/>
            <person name="Yamanishi H."/>
            <person name="Zabarovsky E."/>
            <person name="Zhu S."/>
            <person name="Zimmer A."/>
            <person name="Hide W."/>
            <person name="Bult C."/>
            <person name="Grimmond S.M."/>
            <person name="Teasdale R.D."/>
            <person name="Liu E.T."/>
            <person name="Brusic V."/>
            <person name="Quackenbush J."/>
            <person name="Wahlestedt C."/>
            <person name="Mattick J.S."/>
            <person name="Hume D.A."/>
            <person name="Kai C."/>
            <person name="Sasaki D."/>
            <person name="Tomaru Y."/>
            <person name="Fukuda S."/>
            <person name="Kanamori-Katayama M."/>
            <person name="Suzuki M."/>
            <person name="Aoki J."/>
            <person name="Arakawa T."/>
            <person name="Iida J."/>
            <person name="Imamura K."/>
            <person name="Itoh M."/>
            <person name="Kato T."/>
            <person name="Kawaji H."/>
            <person name="Kawagashira N."/>
            <person name="Kawashima T."/>
            <person name="Kojima M."/>
            <person name="Kondo S."/>
            <person name="Konno H."/>
            <person name="Nakano K."/>
            <person name="Ninomiya N."/>
            <person name="Nishio T."/>
            <person name="Okada M."/>
            <person name="Plessy C."/>
            <person name="Shibata K."/>
            <person name="Shiraki T."/>
            <person name="Suzuki S."/>
            <person name="Tagami M."/>
            <person name="Waki K."/>
            <person name="Watahiki A."/>
            <person name="Okamura-Oho Y."/>
            <person name="Suzuki H."/>
            <person name="Kawai J."/>
            <person name="Hayashizaki Y."/>
        </authorList>
    </citation>
    <scope>NUCLEOTIDE SEQUENCE [LARGE SCALE MRNA]</scope>
    <source>
        <strain>C57BL/6J</strain>
        <tissue>Spinal ganglion</tissue>
    </source>
</reference>
<reference key="2">
    <citation type="journal article" date="2009" name="PLoS Biol.">
        <title>Lineage-specific biology revealed by a finished genome assembly of the mouse.</title>
        <authorList>
            <person name="Church D.M."/>
            <person name="Goodstadt L."/>
            <person name="Hillier L.W."/>
            <person name="Zody M.C."/>
            <person name="Goldstein S."/>
            <person name="She X."/>
            <person name="Bult C.J."/>
            <person name="Agarwala R."/>
            <person name="Cherry J.L."/>
            <person name="DiCuccio M."/>
            <person name="Hlavina W."/>
            <person name="Kapustin Y."/>
            <person name="Meric P."/>
            <person name="Maglott D."/>
            <person name="Birtle Z."/>
            <person name="Marques A.C."/>
            <person name="Graves T."/>
            <person name="Zhou S."/>
            <person name="Teague B."/>
            <person name="Potamousis K."/>
            <person name="Churas C."/>
            <person name="Place M."/>
            <person name="Herschleb J."/>
            <person name="Runnheim R."/>
            <person name="Forrest D."/>
            <person name="Amos-Landgraf J."/>
            <person name="Schwartz D.C."/>
            <person name="Cheng Z."/>
            <person name="Lindblad-Toh K."/>
            <person name="Eichler E.E."/>
            <person name="Ponting C.P."/>
        </authorList>
    </citation>
    <scope>NUCLEOTIDE SEQUENCE [LARGE SCALE GENOMIC DNA]</scope>
    <source>
        <strain>C57BL/6J</strain>
    </source>
</reference>
<reference key="3">
    <citation type="journal article" date="2004" name="Genome Res.">
        <title>The status, quality, and expansion of the NIH full-length cDNA project: the Mammalian Gene Collection (MGC).</title>
        <authorList>
            <consortium name="The MGC Project Team"/>
        </authorList>
    </citation>
    <scope>NUCLEOTIDE SEQUENCE [LARGE SCALE MRNA]</scope>
    <source>
        <strain>FVB/N</strain>
        <tissue>Salivary gland</tissue>
    </source>
</reference>
<reference key="4">
    <citation type="journal article" date="2015" name="PLoS ONE">
        <title>TMEM203 is a novel regulator of intracellular calcium homeostasis and is required for spermatogenesis.</title>
        <authorList>
            <person name="Shambharkar P.B."/>
            <person name="Bittinger M."/>
            <person name="Latario B."/>
            <person name="Xiong Z."/>
            <person name="Bandyopadhyay S."/>
            <person name="Davis V."/>
            <person name="Lin V."/>
            <person name="Yang Y."/>
            <person name="Valdez R."/>
            <person name="Labow M.A."/>
        </authorList>
    </citation>
    <scope>FUNCTION</scope>
    <scope>DISRUPTION PHENOTYPE</scope>
</reference>
<reference key="5">
    <citation type="journal article" date="2019" name="Proc. Natl. Acad. Sci. U.S.A.">
        <title>TMEM203 is a binding partner and regulator of STING-mediated inflammatory signaling in macrophages.</title>
        <authorList>
            <person name="Li Y."/>
            <person name="James S.J."/>
            <person name="Wyllie D.H."/>
            <person name="Wynne C."/>
            <person name="Czibula A."/>
            <person name="Bukhari A."/>
            <person name="Pye K."/>
            <person name="Bte Mustafah S.M."/>
            <person name="Fajka-Boja R."/>
            <person name="Szabo E."/>
            <person name="Angyal A."/>
            <person name="Hegedus Z."/>
            <person name="Kovacs L."/>
            <person name="Hill A.V.S."/>
            <person name="Jefferies C.A."/>
            <person name="Wilson H.L."/>
            <person name="Yongliang Z."/>
            <person name="Kiss-Toth E."/>
        </authorList>
    </citation>
    <scope>FUNCTION</scope>
    <scope>SUBUNIT</scope>
    <scope>SUBCELLULAR LOCATION</scope>
    <scope>INTERACTION WITH STING1 AND STIM1</scope>
</reference>
<protein>
    <recommendedName>
        <fullName>Transmembrane protein 203</fullName>
    </recommendedName>
</protein>
<dbReference type="EMBL" id="AK051471">
    <property type="protein sequence ID" value="BAC34652.1"/>
    <property type="molecule type" value="mRNA"/>
</dbReference>
<dbReference type="EMBL" id="AL732309">
    <property type="status" value="NOT_ANNOTATED_CDS"/>
    <property type="molecule type" value="Genomic_DNA"/>
</dbReference>
<dbReference type="EMBL" id="BC022606">
    <property type="protein sequence ID" value="AAH22606.1"/>
    <property type="molecule type" value="mRNA"/>
</dbReference>
<dbReference type="CCDS" id="CCDS38070.1"/>
<dbReference type="RefSeq" id="NP_796318.2">
    <property type="nucleotide sequence ID" value="NM_177344.3"/>
</dbReference>
<dbReference type="FunCoup" id="Q8R235">
    <property type="interactions" value="1437"/>
</dbReference>
<dbReference type="STRING" id="10090.ENSMUSP00000100614"/>
<dbReference type="PaxDb" id="10090-ENSMUSP00000100614"/>
<dbReference type="Antibodypedia" id="64518">
    <property type="antibodies" value="3 antibodies from 3 providers"/>
</dbReference>
<dbReference type="DNASU" id="227615"/>
<dbReference type="Ensembl" id="ENSMUST00000104998.5">
    <property type="protein sequence ID" value="ENSMUSP00000100614.4"/>
    <property type="gene ID" value="ENSMUSG00000078201.6"/>
</dbReference>
<dbReference type="GeneID" id="227615"/>
<dbReference type="KEGG" id="mmu:227615"/>
<dbReference type="UCSC" id="uc008iqz.1">
    <property type="organism name" value="mouse"/>
</dbReference>
<dbReference type="AGR" id="MGI:2443597"/>
<dbReference type="CTD" id="94107"/>
<dbReference type="MGI" id="MGI:2443597">
    <property type="gene designation" value="Tmem203"/>
</dbReference>
<dbReference type="VEuPathDB" id="HostDB:ENSMUSG00000078201"/>
<dbReference type="eggNOG" id="KOG3631">
    <property type="taxonomic scope" value="Eukaryota"/>
</dbReference>
<dbReference type="GeneTree" id="ENSGT00510000049510"/>
<dbReference type="HOGENOM" id="CLU_145619_1_0_1"/>
<dbReference type="InParanoid" id="Q8R235"/>
<dbReference type="OMA" id="LNTYFCA"/>
<dbReference type="OrthoDB" id="6234541at2759"/>
<dbReference type="PhylomeDB" id="Q8R235"/>
<dbReference type="TreeFam" id="TF323514"/>
<dbReference type="BioGRID-ORCS" id="227615">
    <property type="hits" value="7 hits in 78 CRISPR screens"/>
</dbReference>
<dbReference type="PRO" id="PR:Q8R235"/>
<dbReference type="Proteomes" id="UP000000589">
    <property type="component" value="Chromosome 2"/>
</dbReference>
<dbReference type="RNAct" id="Q8R235">
    <property type="molecule type" value="protein"/>
</dbReference>
<dbReference type="Bgee" id="ENSMUSG00000078201">
    <property type="expression patterns" value="Expressed in embryonic brain and 190 other cell types or tissues"/>
</dbReference>
<dbReference type="GO" id="GO:0005783">
    <property type="term" value="C:endoplasmic reticulum"/>
    <property type="evidence" value="ECO:0000250"/>
    <property type="project" value="UniProtKB"/>
</dbReference>
<dbReference type="GO" id="GO:0005789">
    <property type="term" value="C:endoplasmic reticulum membrane"/>
    <property type="evidence" value="ECO:0007669"/>
    <property type="project" value="UniProtKB-SubCell"/>
</dbReference>
<dbReference type="GO" id="GO:0005793">
    <property type="term" value="C:endoplasmic reticulum-Golgi intermediate compartment"/>
    <property type="evidence" value="ECO:0007669"/>
    <property type="project" value="UniProtKB-SubCell"/>
</dbReference>
<dbReference type="GO" id="GO:0005765">
    <property type="term" value="C:lysosomal membrane"/>
    <property type="evidence" value="ECO:0007669"/>
    <property type="project" value="UniProtKB-SubCell"/>
</dbReference>
<dbReference type="GO" id="GO:0006874">
    <property type="term" value="P:intracellular calcium ion homeostasis"/>
    <property type="evidence" value="ECO:0000315"/>
    <property type="project" value="UniProtKB"/>
</dbReference>
<dbReference type="GO" id="GO:0007283">
    <property type="term" value="P:spermatogenesis"/>
    <property type="evidence" value="ECO:0000315"/>
    <property type="project" value="UniProtKB"/>
</dbReference>
<dbReference type="CDD" id="cd22816">
    <property type="entry name" value="TMEM203"/>
    <property type="match status" value="1"/>
</dbReference>
<dbReference type="InterPro" id="IPR019396">
    <property type="entry name" value="TM_Fragile-X-F-assoc"/>
</dbReference>
<dbReference type="PANTHER" id="PTHR13568">
    <property type="entry name" value="FAM11A, B PROTEIN"/>
    <property type="match status" value="1"/>
</dbReference>
<dbReference type="PANTHER" id="PTHR13568:SF9">
    <property type="entry name" value="TRANSMEMBRANE PROTEIN 203"/>
    <property type="match status" value="1"/>
</dbReference>
<gene>
    <name type="primary">Tmem203</name>
</gene>
<proteinExistence type="evidence at protein level"/>